<gene>
    <name evidence="1" type="primary">truB</name>
    <name type="ordered locus">Synpcc7942_1222</name>
    <name type="ORF">sef0005</name>
</gene>
<dbReference type="EC" id="5.4.99.25" evidence="1"/>
<dbReference type="EMBL" id="AY120853">
    <property type="protein sequence ID" value="AAM82680.1"/>
    <property type="molecule type" value="Genomic_DNA"/>
</dbReference>
<dbReference type="EMBL" id="CP000100">
    <property type="protein sequence ID" value="ABB57252.1"/>
    <property type="molecule type" value="Genomic_DNA"/>
</dbReference>
<dbReference type="EMBL" id="AB010691">
    <property type="protein sequence ID" value="BAA37097.1"/>
    <property type="molecule type" value="Genomic_DNA"/>
</dbReference>
<dbReference type="PIR" id="T44263">
    <property type="entry name" value="T44263"/>
</dbReference>
<dbReference type="RefSeq" id="WP_011242642.1">
    <property type="nucleotide sequence ID" value="NZ_JACJTX010000003.1"/>
</dbReference>
<dbReference type="SMR" id="Q8KIY0"/>
<dbReference type="STRING" id="1140.Synpcc7942_1222"/>
<dbReference type="PaxDb" id="1140-Synpcc7942_1222"/>
<dbReference type="GeneID" id="72430081"/>
<dbReference type="KEGG" id="syf:Synpcc7942_1222"/>
<dbReference type="eggNOG" id="COG0130">
    <property type="taxonomic scope" value="Bacteria"/>
</dbReference>
<dbReference type="HOGENOM" id="CLU_032087_0_0_3"/>
<dbReference type="OrthoDB" id="9802309at2"/>
<dbReference type="BioCyc" id="SYNEL:SYNPCC7942_1222-MONOMER"/>
<dbReference type="Proteomes" id="UP000889800">
    <property type="component" value="Chromosome"/>
</dbReference>
<dbReference type="GO" id="GO:0003723">
    <property type="term" value="F:RNA binding"/>
    <property type="evidence" value="ECO:0007669"/>
    <property type="project" value="InterPro"/>
</dbReference>
<dbReference type="GO" id="GO:0160148">
    <property type="term" value="F:tRNA pseudouridine(55) synthase activity"/>
    <property type="evidence" value="ECO:0007669"/>
    <property type="project" value="UniProtKB-EC"/>
</dbReference>
<dbReference type="GO" id="GO:1990481">
    <property type="term" value="P:mRNA pseudouridine synthesis"/>
    <property type="evidence" value="ECO:0007669"/>
    <property type="project" value="TreeGrafter"/>
</dbReference>
<dbReference type="GO" id="GO:0031119">
    <property type="term" value="P:tRNA pseudouridine synthesis"/>
    <property type="evidence" value="ECO:0007669"/>
    <property type="project" value="UniProtKB-UniRule"/>
</dbReference>
<dbReference type="CDD" id="cd02573">
    <property type="entry name" value="PseudoU_synth_EcTruB"/>
    <property type="match status" value="1"/>
</dbReference>
<dbReference type="CDD" id="cd21152">
    <property type="entry name" value="PUA_TruB_bacterial"/>
    <property type="match status" value="1"/>
</dbReference>
<dbReference type="Gene3D" id="3.30.2350.10">
    <property type="entry name" value="Pseudouridine synthase"/>
    <property type="match status" value="1"/>
</dbReference>
<dbReference type="Gene3D" id="2.30.130.10">
    <property type="entry name" value="PUA domain"/>
    <property type="match status" value="1"/>
</dbReference>
<dbReference type="HAMAP" id="MF_01080">
    <property type="entry name" value="TruB_bact"/>
    <property type="match status" value="1"/>
</dbReference>
<dbReference type="InterPro" id="IPR020103">
    <property type="entry name" value="PsdUridine_synth_cat_dom_sf"/>
</dbReference>
<dbReference type="InterPro" id="IPR002501">
    <property type="entry name" value="PsdUridine_synth_N"/>
</dbReference>
<dbReference type="InterPro" id="IPR015947">
    <property type="entry name" value="PUA-like_sf"/>
</dbReference>
<dbReference type="InterPro" id="IPR036974">
    <property type="entry name" value="PUA_sf"/>
</dbReference>
<dbReference type="InterPro" id="IPR014780">
    <property type="entry name" value="tRNA_psdUridine_synth_TruB"/>
</dbReference>
<dbReference type="InterPro" id="IPR015240">
    <property type="entry name" value="tRNA_sdUridine_synth_fam1_C"/>
</dbReference>
<dbReference type="InterPro" id="IPR032819">
    <property type="entry name" value="TruB_C"/>
</dbReference>
<dbReference type="NCBIfam" id="TIGR00431">
    <property type="entry name" value="TruB"/>
    <property type="match status" value="1"/>
</dbReference>
<dbReference type="PANTHER" id="PTHR13767:SF2">
    <property type="entry name" value="PSEUDOURIDYLATE SYNTHASE TRUB1"/>
    <property type="match status" value="1"/>
</dbReference>
<dbReference type="PANTHER" id="PTHR13767">
    <property type="entry name" value="TRNA-PSEUDOURIDINE SYNTHASE"/>
    <property type="match status" value="1"/>
</dbReference>
<dbReference type="Pfam" id="PF09157">
    <property type="entry name" value="TruB-C_2"/>
    <property type="match status" value="1"/>
</dbReference>
<dbReference type="Pfam" id="PF16198">
    <property type="entry name" value="TruB_C_2"/>
    <property type="match status" value="1"/>
</dbReference>
<dbReference type="Pfam" id="PF01509">
    <property type="entry name" value="TruB_N"/>
    <property type="match status" value="1"/>
</dbReference>
<dbReference type="SUPFAM" id="SSF55120">
    <property type="entry name" value="Pseudouridine synthase"/>
    <property type="match status" value="1"/>
</dbReference>
<dbReference type="SUPFAM" id="SSF88697">
    <property type="entry name" value="PUA domain-like"/>
    <property type="match status" value="1"/>
</dbReference>
<comment type="function">
    <text evidence="1">Responsible for synthesis of pseudouridine from uracil-55 in the psi GC loop of transfer RNAs.</text>
</comment>
<comment type="catalytic activity">
    <reaction evidence="1">
        <text>uridine(55) in tRNA = pseudouridine(55) in tRNA</text>
        <dbReference type="Rhea" id="RHEA:42532"/>
        <dbReference type="Rhea" id="RHEA-COMP:10101"/>
        <dbReference type="Rhea" id="RHEA-COMP:10102"/>
        <dbReference type="ChEBI" id="CHEBI:65314"/>
        <dbReference type="ChEBI" id="CHEBI:65315"/>
        <dbReference type="EC" id="5.4.99.25"/>
    </reaction>
</comment>
<comment type="similarity">
    <text evidence="1">Belongs to the pseudouridine synthase TruB family. Type 1 subfamily.</text>
</comment>
<feature type="chain" id="PRO_0000121926" description="tRNA pseudouridine synthase B">
    <location>
        <begin position="1"/>
        <end position="294"/>
    </location>
</feature>
<feature type="active site" description="Nucleophile" evidence="1">
    <location>
        <position position="40"/>
    </location>
</feature>
<feature type="sequence conflict" description="In Ref. 1; AAM82680." evidence="2" ref="1">
    <original>SGSQAELSVEIHCGAGTYIRSLARDLGAVL</original>
    <variation>IGQSSRIICRNPLWCWHLHPFSSARPRSRV</variation>
    <location>
        <begin position="158"/>
        <end position="187"/>
    </location>
</feature>
<protein>
    <recommendedName>
        <fullName evidence="1">tRNA pseudouridine synthase B</fullName>
        <ecNumber evidence="1">5.4.99.25</ecNumber>
    </recommendedName>
    <alternativeName>
        <fullName evidence="1">tRNA pseudouridine(55) synthase</fullName>
        <shortName evidence="1">Psi55 synthase</shortName>
    </alternativeName>
    <alternativeName>
        <fullName evidence="1">tRNA pseudouridylate synthase</fullName>
    </alternativeName>
    <alternativeName>
        <fullName evidence="1">tRNA-uridine isomerase</fullName>
    </alternativeName>
</protein>
<keyword id="KW-0413">Isomerase</keyword>
<keyword id="KW-1185">Reference proteome</keyword>
<keyword id="KW-0819">tRNA processing</keyword>
<organism>
    <name type="scientific">Synechococcus elongatus (strain ATCC 33912 / PCC 7942 / FACHB-805)</name>
    <name type="common">Anacystis nidulans R2</name>
    <dbReference type="NCBI Taxonomy" id="1140"/>
    <lineage>
        <taxon>Bacteria</taxon>
        <taxon>Bacillati</taxon>
        <taxon>Cyanobacteriota</taxon>
        <taxon>Cyanophyceae</taxon>
        <taxon>Synechococcales</taxon>
        <taxon>Synechococcaceae</taxon>
        <taxon>Synechococcus</taxon>
    </lineage>
</organism>
<sequence>MSSEGFVNLDKPAGWTSHDCVAKLRRLLRERRIGHGGTLDPAVTGVLPIAVGRATRLLPYLPSGKTYVGTIRFGLQTSTDDLTGDRLAEADTSHLSREAIEAALPQFLGHIQQQPPQVSAVQVQGQRLYQLARRGEAPTELPWRTVEIQSIRILQWRSGSQAELSVEIHCGAGTYIRSLARDLGAVLGVGGTLAELRRTASSGFDLNQSTPLTELLDGAAVPLLALDLPLQHLAKVQLSAETSDRWRQGQAMPVPDSVLPDAAPVRVYDLNGQFLGIGAIAAGLCKPKVVLAAL</sequence>
<accession>Q8KIY0</accession>
<accession>Q31NW7</accession>
<accession>Q9Z3H8</accession>
<reference key="1">
    <citation type="submission" date="2002-06" db="EMBL/GenBank/DDBJ databases">
        <title>Synechococcus elongatus PCC7942 cosmid 7G3.</title>
        <authorList>
            <person name="Holtman C.K."/>
            <person name="Sandoval P."/>
            <person name="Chen Y."/>
            <person name="Socias T."/>
            <person name="Mohler B.J."/>
            <person name="McMurtry S."/>
            <person name="Gonzalez A."/>
            <person name="Salinas I."/>
            <person name="Golden S.S."/>
            <person name="Youderian P."/>
        </authorList>
    </citation>
    <scope>NUCLEOTIDE SEQUENCE [GENOMIC DNA]</scope>
</reference>
<reference key="2">
    <citation type="submission" date="2005-08" db="EMBL/GenBank/DDBJ databases">
        <title>Complete sequence of chromosome 1 of Synechococcus elongatus PCC 7942.</title>
        <authorList>
            <consortium name="US DOE Joint Genome Institute"/>
            <person name="Copeland A."/>
            <person name="Lucas S."/>
            <person name="Lapidus A."/>
            <person name="Barry K."/>
            <person name="Detter J.C."/>
            <person name="Glavina T."/>
            <person name="Hammon N."/>
            <person name="Israni S."/>
            <person name="Pitluck S."/>
            <person name="Schmutz J."/>
            <person name="Larimer F."/>
            <person name="Land M."/>
            <person name="Kyrpides N."/>
            <person name="Lykidis A."/>
            <person name="Golden S."/>
            <person name="Richardson P."/>
        </authorList>
    </citation>
    <scope>NUCLEOTIDE SEQUENCE [LARGE SCALE GENOMIC DNA]</scope>
    <source>
        <strain>ATCC 33912 / PCC 7942 / FACHB-805</strain>
    </source>
</reference>
<reference key="3">
    <citation type="journal article" date="1998" name="Science">
        <title>Expression of a gene cluster kaiABC as a circadian feedback process in cyanobacteria.</title>
        <authorList>
            <person name="Ishiura M."/>
            <person name="Kutsuna S."/>
            <person name="Aoki S."/>
            <person name="Iwasaki H."/>
            <person name="Andersson C.R."/>
            <person name="Tanabe A."/>
            <person name="Golden S.S."/>
            <person name="Johnson C.H."/>
            <person name="Kondo T."/>
        </authorList>
    </citation>
    <scope>NUCLEOTIDE SEQUENCE [GENOMIC DNA] OF 1-153</scope>
</reference>
<name>TRUB_SYNE7</name>
<evidence type="ECO:0000255" key="1">
    <source>
        <dbReference type="HAMAP-Rule" id="MF_01080"/>
    </source>
</evidence>
<evidence type="ECO:0000305" key="2"/>
<proteinExistence type="inferred from homology"/>